<comment type="function">
    <text evidence="1 4">Alpha toxins bind voltage-independently at site-3 of sodium channels (Nav) and inhibit the inactivation of the activated channels, thereby blocking neuronal transmission (By similarity). This protein is weakly toxic against insects (ED(50)&gt;2 ug per 100 mg of blowfly larvae), but is inactive against mammalian sodium channels (rNav1.2a, and rNav1.4) (PubMed:20018978).</text>
</comment>
<comment type="subcellular location">
    <subcellularLocation>
        <location evidence="1">Secreted</location>
    </subcellularLocation>
</comment>
<comment type="tissue specificity">
    <text evidence="5">Expressed by the venom gland.</text>
</comment>
<comment type="domain">
    <text evidence="5">Has the structural arrangement of an alpha-helix connected to antiparallel beta-sheets by disulfide bonds (CS-alpha/beta).</text>
</comment>
<comment type="similarity">
    <text evidence="5">Belongs to the long (4 C-C) scorpion toxin superfamily. Sodium channel inhibitor family. Alpha subfamily.</text>
</comment>
<evidence type="ECO:0000250" key="1"/>
<evidence type="ECO:0000255" key="2"/>
<evidence type="ECO:0000255" key="3">
    <source>
        <dbReference type="PROSITE-ProRule" id="PRU01210"/>
    </source>
</evidence>
<evidence type="ECO:0000269" key="4">
    <source>
    </source>
</evidence>
<evidence type="ECO:0000305" key="5"/>
<name>SCX4A_ANDCR</name>
<organism>
    <name type="scientific">Androctonus crassicauda</name>
    <name type="common">Arabian fat-tailed scorpion</name>
    <dbReference type="NCBI Taxonomy" id="122909"/>
    <lineage>
        <taxon>Eukaryota</taxon>
        <taxon>Metazoa</taxon>
        <taxon>Ecdysozoa</taxon>
        <taxon>Arthropoda</taxon>
        <taxon>Chelicerata</taxon>
        <taxon>Arachnida</taxon>
        <taxon>Scorpiones</taxon>
        <taxon>Buthida</taxon>
        <taxon>Buthoidea</taxon>
        <taxon>Buthidae</taxon>
        <taxon>Androctonus</taxon>
    </lineage>
</organism>
<proteinExistence type="inferred from homology"/>
<reference key="1">
    <citation type="journal article" date="2010" name="Mol. Biol. Evol.">
        <title>Positions under positive selection--key for selectivity and potency of scorpion alpha-toxins.</title>
        <authorList>
            <person name="Weinberger H."/>
            <person name="Moran Y."/>
            <person name="Gordon D."/>
            <person name="Turkov M."/>
            <person name="Kahn R."/>
            <person name="Gurevitz M."/>
        </authorList>
    </citation>
    <scope>NUCLEOTIDE SEQUENCE [MRNA]</scope>
    <scope>FUNCTION</scope>
    <source>
        <tissue>Venom gland</tissue>
    </source>
</reference>
<dbReference type="EMBL" id="GQ335453">
    <property type="protein sequence ID" value="ADE42765.1"/>
    <property type="molecule type" value="mRNA"/>
</dbReference>
<dbReference type="SMR" id="D5HR53"/>
<dbReference type="GO" id="GO:0005576">
    <property type="term" value="C:extracellular region"/>
    <property type="evidence" value="ECO:0007669"/>
    <property type="project" value="UniProtKB-SubCell"/>
</dbReference>
<dbReference type="GO" id="GO:0019871">
    <property type="term" value="F:sodium channel inhibitor activity"/>
    <property type="evidence" value="ECO:0007669"/>
    <property type="project" value="InterPro"/>
</dbReference>
<dbReference type="GO" id="GO:0090729">
    <property type="term" value="F:toxin activity"/>
    <property type="evidence" value="ECO:0007669"/>
    <property type="project" value="UniProtKB-KW"/>
</dbReference>
<dbReference type="GO" id="GO:0006952">
    <property type="term" value="P:defense response"/>
    <property type="evidence" value="ECO:0007669"/>
    <property type="project" value="InterPro"/>
</dbReference>
<dbReference type="CDD" id="cd23106">
    <property type="entry name" value="neurotoxins_LC_scorpion"/>
    <property type="match status" value="1"/>
</dbReference>
<dbReference type="Gene3D" id="3.30.30.10">
    <property type="entry name" value="Knottin, scorpion toxin-like"/>
    <property type="match status" value="1"/>
</dbReference>
<dbReference type="InterPro" id="IPR044062">
    <property type="entry name" value="LCN-type_CS_alpha_beta_dom"/>
</dbReference>
<dbReference type="InterPro" id="IPR003614">
    <property type="entry name" value="Scorpion_toxin-like"/>
</dbReference>
<dbReference type="InterPro" id="IPR036574">
    <property type="entry name" value="Scorpion_toxin-like_sf"/>
</dbReference>
<dbReference type="InterPro" id="IPR002061">
    <property type="entry name" value="Scorpion_toxinL/defensin"/>
</dbReference>
<dbReference type="Pfam" id="PF00537">
    <property type="entry name" value="Toxin_3"/>
    <property type="match status" value="1"/>
</dbReference>
<dbReference type="SMART" id="SM00505">
    <property type="entry name" value="Knot1"/>
    <property type="match status" value="1"/>
</dbReference>
<dbReference type="SUPFAM" id="SSF57095">
    <property type="entry name" value="Scorpion toxin-like"/>
    <property type="match status" value="1"/>
</dbReference>
<dbReference type="PROSITE" id="PS51863">
    <property type="entry name" value="LCN_CSAB"/>
    <property type="match status" value="1"/>
</dbReference>
<keyword id="KW-0165">Cleavage on pair of basic residues</keyword>
<keyword id="KW-1015">Disulfide bond</keyword>
<keyword id="KW-0872">Ion channel impairing toxin</keyword>
<keyword id="KW-0528">Neurotoxin</keyword>
<keyword id="KW-0964">Secreted</keyword>
<keyword id="KW-0732">Signal</keyword>
<keyword id="KW-0800">Toxin</keyword>
<keyword id="KW-0738">Voltage-gated sodium channel impairing toxin</keyword>
<protein>
    <recommendedName>
        <fullName>Anti-insect Ac4</fullName>
    </recommendedName>
    <alternativeName>
        <fullName>Neurotoxin 4</fullName>
    </alternativeName>
</protein>
<accession>D5HR53</accession>
<sequence>MISLSLLLMIGVESVRDGYIVDFKNCVYRCVPPCDGLCKKNGGKGGSCSFLIGSGLACWCNALPDNVPIKDPLHKCPKR</sequence>
<feature type="signal peptide" evidence="2">
    <location>
        <begin position="1"/>
        <end position="17"/>
    </location>
</feature>
<feature type="chain" id="PRO_5000585061" description="Anti-insect Ac4">
    <location>
        <begin position="18"/>
        <end position="77"/>
    </location>
</feature>
<feature type="domain" description="LCN-type CS-alpha/beta" evidence="3">
    <location>
        <begin position="18"/>
        <end position="77"/>
    </location>
</feature>
<feature type="disulfide bond" evidence="3">
    <location>
        <begin position="26"/>
        <end position="76"/>
    </location>
</feature>
<feature type="disulfide bond" evidence="3">
    <location>
        <begin position="30"/>
        <end position="48"/>
    </location>
</feature>
<feature type="disulfide bond" evidence="3">
    <location>
        <begin position="34"/>
        <end position="58"/>
    </location>
</feature>
<feature type="disulfide bond" evidence="3">
    <location>
        <begin position="38"/>
        <end position="60"/>
    </location>
</feature>